<keyword id="KW-0349">Heme</keyword>
<keyword id="KW-0408">Iron</keyword>
<keyword id="KW-0472">Membrane</keyword>
<keyword id="KW-0479">Metal-binding</keyword>
<keyword id="KW-0503">Monooxygenase</keyword>
<keyword id="KW-0521">NADP</keyword>
<keyword id="KW-0560">Oxidoreductase</keyword>
<keyword id="KW-0812">Transmembrane</keyword>
<keyword id="KW-1133">Transmembrane helix</keyword>
<evidence type="ECO:0000250" key="1">
    <source>
        <dbReference type="UniProtKB" id="P04798"/>
    </source>
</evidence>
<evidence type="ECO:0000255" key="2"/>
<evidence type="ECO:0000269" key="3">
    <source>
    </source>
</evidence>
<evidence type="ECO:0000269" key="4">
    <source ref="2"/>
</evidence>
<evidence type="ECO:0000303" key="5">
    <source>
    </source>
</evidence>
<evidence type="ECO:0000305" key="6"/>
<evidence type="ECO:0000305" key="7">
    <source>
    </source>
</evidence>
<protein>
    <recommendedName>
        <fullName evidence="5">Cytochrome P450 monooxygenase afvE</fullName>
        <ecNumber evidence="7">1.-.-.-</ecNumber>
    </recommendedName>
    <alternativeName>
        <fullName evidence="5">Aflavarin synthesis protein E</fullName>
    </alternativeName>
</protein>
<sequence>MSACLRWWSRKFDCEKEYAEAYKQYSKTGKPYATRLKNNDHGIVLPLNSTKEWRTLPHDQLSFLHALSEFADLYMHINMTDRTPLQAVHYCNNTKTLSRFNRLMVDATDRALPLIVGKDTESEWKRANAFHTILSLCSTVAMSVLLGPEFSMDTSLIQTIMMYNTAIMPSCAKRTSYPRILRPFVWRLSPLCRAMKSDLTKTKIKLTPEIKHRIDIARSKKGWLEEGPMSLLDGLIETAFEKGCLSRSSDRGDDDQQVALLAEEIIFYHFELSTPVAFFIIFAVYVIMNNKEYSTPLREEISEALKLSGGSFTLDTLNHAPKLASFVKETCRFFRRVMKPIHLESINLSLKPGTIIMAPGRDVHLDPDYYDNPTTFNGYRFYDASRGTCTPHISTTSPTFLTFSHGISACPARVLATQITRTIFIMFLLKFDVELAHEEMPAYGFANGPAYLPNPSVMMRVRPCQKDVLGV</sequence>
<proteinExistence type="evidence at transcript level"/>
<dbReference type="EC" id="1.-.-.-" evidence="7"/>
<dbReference type="EMBL" id="EQ963475">
    <property type="protein sequence ID" value="EED53482.1"/>
    <property type="molecule type" value="Genomic_DNA"/>
</dbReference>
<dbReference type="RefSeq" id="XP_002376728.1">
    <property type="nucleotide sequence ID" value="XM_002376687.1"/>
</dbReference>
<dbReference type="SMR" id="B8N8R3"/>
<dbReference type="EnsemblFungi" id="EED53482">
    <property type="protein sequence ID" value="EED53482"/>
    <property type="gene ID" value="AFLA_108580"/>
</dbReference>
<dbReference type="VEuPathDB" id="FungiDB:AFLA_006790"/>
<dbReference type="eggNOG" id="KOG0158">
    <property type="taxonomic scope" value="Eukaryota"/>
</dbReference>
<dbReference type="HOGENOM" id="CLU_022195_8_0_1"/>
<dbReference type="OMA" id="GTCIGIP"/>
<dbReference type="GO" id="GO:0016020">
    <property type="term" value="C:membrane"/>
    <property type="evidence" value="ECO:0007669"/>
    <property type="project" value="UniProtKB-SubCell"/>
</dbReference>
<dbReference type="GO" id="GO:0020037">
    <property type="term" value="F:heme binding"/>
    <property type="evidence" value="ECO:0007669"/>
    <property type="project" value="InterPro"/>
</dbReference>
<dbReference type="GO" id="GO:0005506">
    <property type="term" value="F:iron ion binding"/>
    <property type="evidence" value="ECO:0007669"/>
    <property type="project" value="InterPro"/>
</dbReference>
<dbReference type="GO" id="GO:0004497">
    <property type="term" value="F:monooxygenase activity"/>
    <property type="evidence" value="ECO:0007669"/>
    <property type="project" value="UniProtKB-KW"/>
</dbReference>
<dbReference type="GO" id="GO:0016705">
    <property type="term" value="F:oxidoreductase activity, acting on paired donors, with incorporation or reduction of molecular oxygen"/>
    <property type="evidence" value="ECO:0007669"/>
    <property type="project" value="InterPro"/>
</dbReference>
<dbReference type="GO" id="GO:0019748">
    <property type="term" value="P:secondary metabolic process"/>
    <property type="evidence" value="ECO:0007669"/>
    <property type="project" value="UniProtKB-ARBA"/>
</dbReference>
<dbReference type="CDD" id="cd11041">
    <property type="entry name" value="CYP503A1-like"/>
    <property type="match status" value="1"/>
</dbReference>
<dbReference type="Gene3D" id="1.10.630.10">
    <property type="entry name" value="Cytochrome P450"/>
    <property type="match status" value="1"/>
</dbReference>
<dbReference type="InterPro" id="IPR001128">
    <property type="entry name" value="Cyt_P450"/>
</dbReference>
<dbReference type="InterPro" id="IPR036396">
    <property type="entry name" value="Cyt_P450_sf"/>
</dbReference>
<dbReference type="PANTHER" id="PTHR46206">
    <property type="entry name" value="CYTOCHROME P450"/>
    <property type="match status" value="1"/>
</dbReference>
<dbReference type="PANTHER" id="PTHR46206:SF7">
    <property type="entry name" value="P450, PUTATIVE (EUROFUNG)-RELATED"/>
    <property type="match status" value="1"/>
</dbReference>
<dbReference type="Pfam" id="PF00067">
    <property type="entry name" value="p450"/>
    <property type="match status" value="1"/>
</dbReference>
<dbReference type="SUPFAM" id="SSF48264">
    <property type="entry name" value="Cytochrome P450"/>
    <property type="match status" value="1"/>
</dbReference>
<name>AFVE_ASPFN</name>
<reference key="1">
    <citation type="journal article" date="2015" name="Genome Announc.">
        <title>Genome sequence of Aspergillus flavus NRRL 3357, a strain that causes aflatoxin contamination of food and feed.</title>
        <authorList>
            <person name="Nierman W.C."/>
            <person name="Yu J."/>
            <person name="Fedorova-Abrams N.D."/>
            <person name="Losada L."/>
            <person name="Cleveland T.E."/>
            <person name="Bhatnagar D."/>
            <person name="Bennett J.W."/>
            <person name="Dean R."/>
            <person name="Payne G.A."/>
        </authorList>
    </citation>
    <scope>NUCLEOTIDE SEQUENCE [LARGE SCALE GENOMIC DNA]</scope>
    <source>
        <strain>ATCC 200026 / FGSC A1120 / IAM 13836 / NRRL 3357 / JCM 12722 / SRRC 167</strain>
    </source>
</reference>
<reference key="2">
    <citation type="journal article" date="1992" name="J. Nat. Prod.">
        <title>Aflavarin and beta-aflatrem: new anti-insectan metabolites from the sclerotia of Aspergillus flavus.</title>
        <authorList>
            <person name="TePaske M.R."/>
            <person name="Gloer J.B."/>
            <person name="Wicklow D.T."/>
            <person name="Dowd P.F."/>
        </authorList>
    </citation>
    <scope>FUNCTION</scope>
</reference>
<reference key="3">
    <citation type="journal article" date="2015" name="Eukaryot. Cell">
        <title>Transcriptome analysis of Aspergillus flavus reveals veA-dependent regulation of secondary metabolite gene clusters, including the novel aflavarin cluster.</title>
        <authorList>
            <person name="Cary J.W."/>
            <person name="Han Z."/>
            <person name="Yin Y."/>
            <person name="Lohmar J.M."/>
            <person name="Shantappa S."/>
            <person name="Harris-Coward P.Y."/>
            <person name="Mack B."/>
            <person name="Ehrlich K.C."/>
            <person name="Wei Q."/>
            <person name="Arroyo-Manzanares N."/>
            <person name="Uka V."/>
            <person name="Vanhaecke L."/>
            <person name="Bhatnagar D."/>
            <person name="Yu J."/>
            <person name="Nierman W.C."/>
            <person name="Johns M.A."/>
            <person name="Sorensen D."/>
            <person name="Shen H."/>
            <person name="De Saeger S."/>
            <person name="Diana Di Mavungu J."/>
            <person name="Calvo A.M."/>
        </authorList>
    </citation>
    <scope>FUNCTION</scope>
    <scope>DISRUPTION PHENOTYPE</scope>
</reference>
<feature type="chain" id="PRO_0000436123" description="Cytochrome P450 monooxygenase afvE">
    <location>
        <begin position="1"/>
        <end position="471"/>
    </location>
</feature>
<feature type="transmembrane region" description="Helical" evidence="2">
    <location>
        <begin position="265"/>
        <end position="285"/>
    </location>
</feature>
<feature type="binding site" description="axial binding residue" evidence="1">
    <location>
        <position position="410"/>
    </location>
    <ligand>
        <name>heme</name>
        <dbReference type="ChEBI" id="CHEBI:30413"/>
    </ligand>
    <ligandPart>
        <name>Fe</name>
        <dbReference type="ChEBI" id="CHEBI:18248"/>
    </ligandPart>
</feature>
<accession>B8N8R3</accession>
<organism>
    <name type="scientific">Aspergillus flavus (strain ATCC 200026 / FGSC A1120 / IAM 13836 / NRRL 3357 / JCM 12722 / SRRC 167)</name>
    <dbReference type="NCBI Taxonomy" id="332952"/>
    <lineage>
        <taxon>Eukaryota</taxon>
        <taxon>Fungi</taxon>
        <taxon>Dikarya</taxon>
        <taxon>Ascomycota</taxon>
        <taxon>Pezizomycotina</taxon>
        <taxon>Eurotiomycetes</taxon>
        <taxon>Eurotiomycetidae</taxon>
        <taxon>Eurotiales</taxon>
        <taxon>Aspergillaceae</taxon>
        <taxon>Aspergillus</taxon>
        <taxon>Aspergillus subgen. Circumdati</taxon>
    </lineage>
</organism>
<comment type="function">
    <text evidence="3 4">Cytochrome P450 monooxygenase; part of the gene cluster that mediates the biosynthesis of aflavarin, a bicoumarin that exhibits anti-insectan activity against the fungivorous beetle C.hemipterus (PubMed:26209694, Ref.2).</text>
</comment>
<comment type="cofactor">
    <cofactor evidence="1">
        <name>heme</name>
        <dbReference type="ChEBI" id="CHEBI:30413"/>
    </cofactor>
</comment>
<comment type="pathway">
    <text evidence="7">Secondary metabolite biosynthesis.</text>
</comment>
<comment type="subcellular location">
    <subcellularLocation>
        <location evidence="2">Membrane</location>
        <topology evidence="2">Single-pass membrane protein</topology>
    </subcellularLocation>
</comment>
<comment type="induction">
    <text evidence="3">Expression is induced by the developmental and secondary metabolism regulator veA (PubMed:26209694).</text>
</comment>
<comment type="disruption phenotype">
    <text evidence="3">Fails to produce aflavarin (PubMed:26209694).</text>
</comment>
<comment type="similarity">
    <text evidence="6">Belongs to the cytochrome P450 family.</text>
</comment>
<gene>
    <name evidence="5" type="primary">afvE</name>
    <name type="ORF">AFLA_108580</name>
</gene>